<comment type="subcellular location">
    <subcellularLocation>
        <location evidence="2">Secreted</location>
    </subcellularLocation>
</comment>
<comment type="similarity">
    <text evidence="8">Belongs to the peptidase S8 family.</text>
</comment>
<comment type="sequence caution" evidence="8">
    <conflict type="erroneous gene model prediction">
        <sequence resource="EMBL-CDS" id="CAA20197"/>
    </conflict>
    <text>The predicted gene At4g21320 has been split into 3 genes: At4g21320, At4g21323 and At4g21326.</text>
</comment>
<comment type="sequence caution" evidence="8">
    <conflict type="erroneous gene model prediction">
        <sequence resource="EMBL-CDS" id="CAB79131"/>
    </conflict>
    <text>The predicted gene At4g21320 has been split into 3 genes: At4g21320, At4g21323 and At4g21326.</text>
</comment>
<name>SBT3C_ARATH</name>
<dbReference type="EC" id="3.4.21.-" evidence="6"/>
<dbReference type="EMBL" id="AL031187">
    <property type="protein sequence ID" value="CAA20197.1"/>
    <property type="status" value="ALT_SEQ"/>
    <property type="molecule type" value="Genomic_DNA"/>
</dbReference>
<dbReference type="EMBL" id="AL161554">
    <property type="protein sequence ID" value="CAB79131.1"/>
    <property type="status" value="ALT_SEQ"/>
    <property type="molecule type" value="Genomic_DNA"/>
</dbReference>
<dbReference type="EMBL" id="CP002687">
    <property type="status" value="NOT_ANNOTATED_CDS"/>
    <property type="molecule type" value="Genomic_DNA"/>
</dbReference>
<dbReference type="EMBL" id="EF637083">
    <property type="protein sequence ID" value="ABV21208.1"/>
    <property type="molecule type" value="Genomic_DNA"/>
</dbReference>
<dbReference type="PIR" id="T05174">
    <property type="entry name" value="T05174"/>
</dbReference>
<dbReference type="SMR" id="F4JJH5"/>
<dbReference type="FunCoup" id="F4JJH5">
    <property type="interactions" value="1"/>
</dbReference>
<dbReference type="MEROPS" id="S08.A30"/>
<dbReference type="MEROPS" id="S08.A32"/>
<dbReference type="GlyCosmos" id="F4JJH5">
    <property type="glycosylation" value="5 sites, No reported glycans"/>
</dbReference>
<dbReference type="GlyGen" id="F4JJH5">
    <property type="glycosylation" value="5 sites"/>
</dbReference>
<dbReference type="PaxDb" id="3702-AT4G21326.1"/>
<dbReference type="ProteomicsDB" id="232690"/>
<dbReference type="Araport" id="AT4G21326"/>
<dbReference type="TAIR" id="AT4G21326">
    <property type="gene designation" value="SBT3.12"/>
</dbReference>
<dbReference type="eggNOG" id="ENOG502QSF0">
    <property type="taxonomic scope" value="Eukaryota"/>
</dbReference>
<dbReference type="HOGENOM" id="CLU_369061_0_0_1"/>
<dbReference type="InParanoid" id="F4JJH5"/>
<dbReference type="PhylomeDB" id="F4JJH5"/>
<dbReference type="PRO" id="PR:F4JJH5"/>
<dbReference type="Proteomes" id="UP000006548">
    <property type="component" value="Chromosome 4"/>
</dbReference>
<dbReference type="ExpressionAtlas" id="F4JJH5">
    <property type="expression patterns" value="baseline and differential"/>
</dbReference>
<dbReference type="GO" id="GO:0005576">
    <property type="term" value="C:extracellular region"/>
    <property type="evidence" value="ECO:0007669"/>
    <property type="project" value="UniProtKB-SubCell"/>
</dbReference>
<dbReference type="GO" id="GO:0004252">
    <property type="term" value="F:serine-type endopeptidase activity"/>
    <property type="evidence" value="ECO:0007669"/>
    <property type="project" value="InterPro"/>
</dbReference>
<dbReference type="GO" id="GO:0006508">
    <property type="term" value="P:proteolysis"/>
    <property type="evidence" value="ECO:0007669"/>
    <property type="project" value="UniProtKB-KW"/>
</dbReference>
<dbReference type="CDD" id="cd02120">
    <property type="entry name" value="PA_subtilisin_like"/>
    <property type="match status" value="1"/>
</dbReference>
<dbReference type="CDD" id="cd04852">
    <property type="entry name" value="Peptidases_S8_3"/>
    <property type="match status" value="1"/>
</dbReference>
<dbReference type="FunFam" id="2.60.40.2310:FF:000001">
    <property type="entry name" value="Subtilisin-like protease SBT1.5"/>
    <property type="match status" value="1"/>
</dbReference>
<dbReference type="FunFam" id="3.40.50.200:FF:000006">
    <property type="entry name" value="Subtilisin-like protease SBT1.5"/>
    <property type="match status" value="1"/>
</dbReference>
<dbReference type="FunFam" id="3.30.70.80:FF:000002">
    <property type="entry name" value="Subtilisin-like protease SBT5.3"/>
    <property type="match status" value="1"/>
</dbReference>
<dbReference type="Gene3D" id="2.60.40.2310">
    <property type="match status" value="1"/>
</dbReference>
<dbReference type="Gene3D" id="3.50.30.30">
    <property type="match status" value="1"/>
</dbReference>
<dbReference type="Gene3D" id="3.30.70.80">
    <property type="entry name" value="Peptidase S8 propeptide/proteinase inhibitor I9"/>
    <property type="match status" value="1"/>
</dbReference>
<dbReference type="Gene3D" id="3.40.50.200">
    <property type="entry name" value="Peptidase S8/S53 domain"/>
    <property type="match status" value="1"/>
</dbReference>
<dbReference type="InterPro" id="IPR000209">
    <property type="entry name" value="Peptidase_S8/S53_dom"/>
</dbReference>
<dbReference type="InterPro" id="IPR036852">
    <property type="entry name" value="Peptidase_S8/S53_dom_sf"/>
</dbReference>
<dbReference type="InterPro" id="IPR023828">
    <property type="entry name" value="Peptidase_S8_Ser-AS"/>
</dbReference>
<dbReference type="InterPro" id="IPR015500">
    <property type="entry name" value="Peptidase_S8_subtilisin-rel"/>
</dbReference>
<dbReference type="InterPro" id="IPR034197">
    <property type="entry name" value="Peptidases_S8_3"/>
</dbReference>
<dbReference type="InterPro" id="IPR010259">
    <property type="entry name" value="S8pro/Inhibitor_I9"/>
</dbReference>
<dbReference type="InterPro" id="IPR037045">
    <property type="entry name" value="S8pro/Inhibitor_I9_sf"/>
</dbReference>
<dbReference type="InterPro" id="IPR045051">
    <property type="entry name" value="SBT"/>
</dbReference>
<dbReference type="InterPro" id="IPR041469">
    <property type="entry name" value="Subtilisin-like_FN3"/>
</dbReference>
<dbReference type="PANTHER" id="PTHR10795">
    <property type="entry name" value="PROPROTEIN CONVERTASE SUBTILISIN/KEXIN"/>
    <property type="match status" value="1"/>
</dbReference>
<dbReference type="Pfam" id="PF17766">
    <property type="entry name" value="fn3_6"/>
    <property type="match status" value="1"/>
</dbReference>
<dbReference type="Pfam" id="PF05922">
    <property type="entry name" value="Inhibitor_I9"/>
    <property type="match status" value="1"/>
</dbReference>
<dbReference type="Pfam" id="PF00082">
    <property type="entry name" value="Peptidase_S8"/>
    <property type="match status" value="1"/>
</dbReference>
<dbReference type="PRINTS" id="PR00723">
    <property type="entry name" value="SUBTILISIN"/>
</dbReference>
<dbReference type="SUPFAM" id="SSF52743">
    <property type="entry name" value="Subtilisin-like"/>
    <property type="match status" value="1"/>
</dbReference>
<dbReference type="PROSITE" id="PS51892">
    <property type="entry name" value="SUBTILASE"/>
    <property type="match status" value="1"/>
</dbReference>
<dbReference type="PROSITE" id="PS00137">
    <property type="entry name" value="SUBTILASE_HIS"/>
    <property type="match status" value="1"/>
</dbReference>
<dbReference type="PROSITE" id="PS00138">
    <property type="entry name" value="SUBTILASE_SER"/>
    <property type="match status" value="1"/>
</dbReference>
<protein>
    <recommendedName>
        <fullName evidence="7">Subtilisin-like protease SBT3.12</fullName>
        <ecNumber evidence="6">3.4.21.-</ecNumber>
    </recommendedName>
    <alternativeName>
        <fullName evidence="7">Subtilase subfamily 3 member 12</fullName>
        <shortName evidence="7">AtSBT3.12</shortName>
    </alternativeName>
</protein>
<organism evidence="11">
    <name type="scientific">Arabidopsis thaliana</name>
    <name type="common">Mouse-ear cress</name>
    <dbReference type="NCBI Taxonomy" id="3702"/>
    <lineage>
        <taxon>Eukaryota</taxon>
        <taxon>Viridiplantae</taxon>
        <taxon>Streptophyta</taxon>
        <taxon>Embryophyta</taxon>
        <taxon>Tracheophyta</taxon>
        <taxon>Spermatophyta</taxon>
        <taxon>Magnoliopsida</taxon>
        <taxon>eudicotyledons</taxon>
        <taxon>Gunneridae</taxon>
        <taxon>Pentapetalae</taxon>
        <taxon>rosids</taxon>
        <taxon>malvids</taxon>
        <taxon>Brassicales</taxon>
        <taxon>Brassicaceae</taxon>
        <taxon>Camelineae</taxon>
        <taxon>Arabidopsis</taxon>
    </lineage>
</organism>
<proteinExistence type="inferred from homology"/>
<feature type="signal peptide" evidence="3">
    <location>
        <begin position="1"/>
        <end position="28"/>
    </location>
</feature>
<feature type="propeptide" id="PRO_0000435208" description="Activation peptide" evidence="1">
    <location>
        <begin position="29"/>
        <end position="117"/>
    </location>
</feature>
<feature type="chain" id="PRO_5003311531" description="Subtilisin-like protease SBT3.12" evidence="3">
    <location>
        <begin position="118"/>
        <end status="unknown"/>
    </location>
</feature>
<feature type="propeptide" id="PRO_0000435209" evidence="1">
    <location>
        <begin status="unknown"/>
        <end position="754"/>
    </location>
</feature>
<feature type="domain" description="Inhibitor I9" evidence="3">
    <location>
        <begin position="39"/>
        <end position="116"/>
    </location>
</feature>
<feature type="domain" description="Peptidase S8" evidence="5">
    <location>
        <begin position="121"/>
        <end position="606"/>
    </location>
</feature>
<feature type="active site" description="Charge relay system" evidence="5">
    <location>
        <position position="151"/>
    </location>
</feature>
<feature type="active site" description="Charge relay system" evidence="5">
    <location>
        <position position="224"/>
    </location>
</feature>
<feature type="active site" description="Charge relay system" evidence="5">
    <location>
        <position position="537"/>
    </location>
</feature>
<feature type="glycosylation site" description="N-linked (GlcNAc...) asparagine" evidence="4">
    <location>
        <position position="206"/>
    </location>
</feature>
<feature type="glycosylation site" description="N-linked (GlcNAc...) asparagine" evidence="4">
    <location>
        <position position="239"/>
    </location>
</feature>
<feature type="glycosylation site" description="N-linked (GlcNAc...) asparagine" evidence="4">
    <location>
        <position position="369"/>
    </location>
</feature>
<feature type="glycosylation site" description="N-linked (GlcNAc...) asparagine" evidence="4">
    <location>
        <position position="629"/>
    </location>
</feature>
<feature type="glycosylation site" description="N-linked (GlcNAc...) asparagine" evidence="4">
    <location>
        <position position="740"/>
    </location>
</feature>
<feature type="sequence conflict" description="In Ref. 3; ABV21208." evidence="8" ref="3">
    <original>E</original>
    <variation>G</variation>
    <location>
        <position position="167"/>
    </location>
</feature>
<feature type="sequence conflict" description="In Ref. 3; ABV21208." evidence="8" ref="3">
    <original>G</original>
    <variation>S</variation>
    <location>
        <position position="399"/>
    </location>
</feature>
<feature type="sequence conflict" description="In Ref. 3; ABV21208." evidence="8" ref="3">
    <original>G</original>
    <variation>D</variation>
    <location>
        <position position="726"/>
    </location>
</feature>
<feature type="sequence conflict" description="In Ref. 3; ABV21208." evidence="8" ref="3">
    <original>I</original>
    <variation>T</variation>
    <location>
        <position position="749"/>
    </location>
</feature>
<accession>F4JJH5</accession>
<accession>A7Y5V8</accession>
<accession>O81899</accession>
<reference key="1">
    <citation type="journal article" date="1999" name="Nature">
        <title>Sequence and analysis of chromosome 4 of the plant Arabidopsis thaliana.</title>
        <authorList>
            <person name="Mayer K.F.X."/>
            <person name="Schueller C."/>
            <person name="Wambutt R."/>
            <person name="Murphy G."/>
            <person name="Volckaert G."/>
            <person name="Pohl T."/>
            <person name="Duesterhoeft A."/>
            <person name="Stiekema W."/>
            <person name="Entian K.-D."/>
            <person name="Terryn N."/>
            <person name="Harris B."/>
            <person name="Ansorge W."/>
            <person name="Brandt P."/>
            <person name="Grivell L.A."/>
            <person name="Rieger M."/>
            <person name="Weichselgartner M."/>
            <person name="de Simone V."/>
            <person name="Obermaier B."/>
            <person name="Mache R."/>
            <person name="Mueller M."/>
            <person name="Kreis M."/>
            <person name="Delseny M."/>
            <person name="Puigdomenech P."/>
            <person name="Watson M."/>
            <person name="Schmidtheini T."/>
            <person name="Reichert B."/>
            <person name="Portetelle D."/>
            <person name="Perez-Alonso M."/>
            <person name="Boutry M."/>
            <person name="Bancroft I."/>
            <person name="Vos P."/>
            <person name="Hoheisel J."/>
            <person name="Zimmermann W."/>
            <person name="Wedler H."/>
            <person name="Ridley P."/>
            <person name="Langham S.-A."/>
            <person name="McCullagh B."/>
            <person name="Bilham L."/>
            <person name="Robben J."/>
            <person name="van der Schueren J."/>
            <person name="Grymonprez B."/>
            <person name="Chuang Y.-J."/>
            <person name="Vandenbussche F."/>
            <person name="Braeken M."/>
            <person name="Weltjens I."/>
            <person name="Voet M."/>
            <person name="Bastiaens I."/>
            <person name="Aert R."/>
            <person name="Defoor E."/>
            <person name="Weitzenegger T."/>
            <person name="Bothe G."/>
            <person name="Ramsperger U."/>
            <person name="Hilbert H."/>
            <person name="Braun M."/>
            <person name="Holzer E."/>
            <person name="Brandt A."/>
            <person name="Peters S."/>
            <person name="van Staveren M."/>
            <person name="Dirkse W."/>
            <person name="Mooijman P."/>
            <person name="Klein Lankhorst R."/>
            <person name="Rose M."/>
            <person name="Hauf J."/>
            <person name="Koetter P."/>
            <person name="Berneiser S."/>
            <person name="Hempel S."/>
            <person name="Feldpausch M."/>
            <person name="Lamberth S."/>
            <person name="Van den Daele H."/>
            <person name="De Keyser A."/>
            <person name="Buysshaert C."/>
            <person name="Gielen J."/>
            <person name="Villarroel R."/>
            <person name="De Clercq R."/>
            <person name="van Montagu M."/>
            <person name="Rogers J."/>
            <person name="Cronin A."/>
            <person name="Quail M.A."/>
            <person name="Bray-Allen S."/>
            <person name="Clark L."/>
            <person name="Doggett J."/>
            <person name="Hall S."/>
            <person name="Kay M."/>
            <person name="Lennard N."/>
            <person name="McLay K."/>
            <person name="Mayes R."/>
            <person name="Pettett A."/>
            <person name="Rajandream M.A."/>
            <person name="Lyne M."/>
            <person name="Benes V."/>
            <person name="Rechmann S."/>
            <person name="Borkova D."/>
            <person name="Bloecker H."/>
            <person name="Scharfe M."/>
            <person name="Grimm M."/>
            <person name="Loehnert T.-H."/>
            <person name="Dose S."/>
            <person name="de Haan M."/>
            <person name="Maarse A.C."/>
            <person name="Schaefer M."/>
            <person name="Mueller-Auer S."/>
            <person name="Gabel C."/>
            <person name="Fuchs M."/>
            <person name="Fartmann B."/>
            <person name="Granderath K."/>
            <person name="Dauner D."/>
            <person name="Herzl A."/>
            <person name="Neumann S."/>
            <person name="Argiriou A."/>
            <person name="Vitale D."/>
            <person name="Liguori R."/>
            <person name="Piravandi E."/>
            <person name="Massenet O."/>
            <person name="Quigley F."/>
            <person name="Clabauld G."/>
            <person name="Muendlein A."/>
            <person name="Felber R."/>
            <person name="Schnabl S."/>
            <person name="Hiller R."/>
            <person name="Schmidt W."/>
            <person name="Lecharny A."/>
            <person name="Aubourg S."/>
            <person name="Chefdor F."/>
            <person name="Cooke R."/>
            <person name="Berger C."/>
            <person name="Monfort A."/>
            <person name="Casacuberta E."/>
            <person name="Gibbons T."/>
            <person name="Weber N."/>
            <person name="Vandenbol M."/>
            <person name="Bargues M."/>
            <person name="Terol J."/>
            <person name="Torres A."/>
            <person name="Perez-Perez A."/>
            <person name="Purnelle B."/>
            <person name="Bent E."/>
            <person name="Johnson S."/>
            <person name="Tacon D."/>
            <person name="Jesse T."/>
            <person name="Heijnen L."/>
            <person name="Schwarz S."/>
            <person name="Scholler P."/>
            <person name="Heber S."/>
            <person name="Francs P."/>
            <person name="Bielke C."/>
            <person name="Frishman D."/>
            <person name="Haase D."/>
            <person name="Lemcke K."/>
            <person name="Mewes H.-W."/>
            <person name="Stocker S."/>
            <person name="Zaccaria P."/>
            <person name="Bevan M."/>
            <person name="Wilson R.K."/>
            <person name="de la Bastide M."/>
            <person name="Habermann K."/>
            <person name="Parnell L."/>
            <person name="Dedhia N."/>
            <person name="Gnoj L."/>
            <person name="Schutz K."/>
            <person name="Huang E."/>
            <person name="Spiegel L."/>
            <person name="Sekhon M."/>
            <person name="Murray J."/>
            <person name="Sheet P."/>
            <person name="Cordes M."/>
            <person name="Abu-Threideh J."/>
            <person name="Stoneking T."/>
            <person name="Kalicki J."/>
            <person name="Graves T."/>
            <person name="Harmon G."/>
            <person name="Edwards J."/>
            <person name="Latreille P."/>
            <person name="Courtney L."/>
            <person name="Cloud J."/>
            <person name="Abbott A."/>
            <person name="Scott K."/>
            <person name="Johnson D."/>
            <person name="Minx P."/>
            <person name="Bentley D."/>
            <person name="Fulton B."/>
            <person name="Miller N."/>
            <person name="Greco T."/>
            <person name="Kemp K."/>
            <person name="Kramer J."/>
            <person name="Fulton L."/>
            <person name="Mardis E."/>
            <person name="Dante M."/>
            <person name="Pepin K."/>
            <person name="Hillier L.W."/>
            <person name="Nelson J."/>
            <person name="Spieth J."/>
            <person name="Ryan E."/>
            <person name="Andrews S."/>
            <person name="Geisel C."/>
            <person name="Layman D."/>
            <person name="Du H."/>
            <person name="Ali J."/>
            <person name="Berghoff A."/>
            <person name="Jones K."/>
            <person name="Drone K."/>
            <person name="Cotton M."/>
            <person name="Joshu C."/>
            <person name="Antonoiu B."/>
            <person name="Zidanic M."/>
            <person name="Strong C."/>
            <person name="Sun H."/>
            <person name="Lamar B."/>
            <person name="Yordan C."/>
            <person name="Ma P."/>
            <person name="Zhong J."/>
            <person name="Preston R."/>
            <person name="Vil D."/>
            <person name="Shekher M."/>
            <person name="Matero A."/>
            <person name="Shah R."/>
            <person name="Swaby I.K."/>
            <person name="O'Shaughnessy A."/>
            <person name="Rodriguez M."/>
            <person name="Hoffman J."/>
            <person name="Till S."/>
            <person name="Granat S."/>
            <person name="Shohdy N."/>
            <person name="Hasegawa A."/>
            <person name="Hameed A."/>
            <person name="Lodhi M."/>
            <person name="Johnson A."/>
            <person name="Chen E."/>
            <person name="Marra M.A."/>
            <person name="Martienssen R."/>
            <person name="McCombie W.R."/>
        </authorList>
    </citation>
    <scope>NUCLEOTIDE SEQUENCE [LARGE SCALE GENOMIC DNA]</scope>
    <source>
        <strain>cv. Columbia</strain>
    </source>
</reference>
<reference key="2">
    <citation type="journal article" date="2017" name="Plant J.">
        <title>Araport11: a complete reannotation of the Arabidopsis thaliana reference genome.</title>
        <authorList>
            <person name="Cheng C.Y."/>
            <person name="Krishnakumar V."/>
            <person name="Chan A.P."/>
            <person name="Thibaud-Nissen F."/>
            <person name="Schobel S."/>
            <person name="Town C.D."/>
        </authorList>
    </citation>
    <scope>GENOME REANNOTATION</scope>
    <source>
        <strain>cv. Columbia</strain>
    </source>
</reference>
<reference key="3">
    <citation type="journal article" date="2007" name="Science">
        <title>The evolution of selfing in Arabidopsis thaliana.</title>
        <authorList>
            <person name="Tang C."/>
            <person name="Toomajian C."/>
            <person name="Sherman-Broyles S."/>
            <person name="Plagnol V."/>
            <person name="Guo Y.-L."/>
            <person name="Hu T.T."/>
            <person name="Clark R.M."/>
            <person name="Nasrallah J.B."/>
            <person name="Weigel D."/>
            <person name="Nordborg M."/>
        </authorList>
    </citation>
    <scope>NUCLEOTIDE SEQUENCE [GENOMIC DNA] OF 61-754</scope>
    <source>
        <strain>cv. Cvi-0</strain>
    </source>
</reference>
<reference key="4">
    <citation type="journal article" date="2005" name="PLoS Comput. Biol.">
        <title>Inferring hypotheses on functional relationships of genes: Analysis of the Arabidopsis thaliana subtilase gene family.</title>
        <authorList>
            <person name="Rautengarten C."/>
            <person name="Steinhauser D."/>
            <person name="Bussis D."/>
            <person name="Stintzi A."/>
            <person name="Schaller A."/>
            <person name="Kopka J."/>
            <person name="Altmann T."/>
        </authorList>
    </citation>
    <scope>GENE FAMILY</scope>
    <scope>NOMENCLATURE</scope>
</reference>
<evidence type="ECO:0000250" key="1">
    <source>
        <dbReference type="UniProtKB" id="Q39547"/>
    </source>
</evidence>
<evidence type="ECO:0000250" key="2">
    <source>
        <dbReference type="UniProtKB" id="Q84WS0"/>
    </source>
</evidence>
<evidence type="ECO:0000255" key="3"/>
<evidence type="ECO:0000255" key="4">
    <source>
        <dbReference type="PROSITE-ProRule" id="PRU00498"/>
    </source>
</evidence>
<evidence type="ECO:0000255" key="5">
    <source>
        <dbReference type="PROSITE-ProRule" id="PRU01240"/>
    </source>
</evidence>
<evidence type="ECO:0000255" key="6">
    <source>
        <dbReference type="PROSITE-ProRule" id="PRU10082"/>
    </source>
</evidence>
<evidence type="ECO:0000303" key="7">
    <source>
    </source>
</evidence>
<evidence type="ECO:0000305" key="8"/>
<evidence type="ECO:0000312" key="9">
    <source>
        <dbReference type="Araport" id="AT4G21326"/>
    </source>
</evidence>
<evidence type="ECO:0000312" key="10">
    <source>
        <dbReference type="EMBL" id="CAA20197.1"/>
    </source>
</evidence>
<evidence type="ECO:0000312" key="11">
    <source>
        <dbReference type="Proteomes" id="UP000006548"/>
    </source>
</evidence>
<keyword id="KW-0068">Autocatalytic cleavage</keyword>
<keyword id="KW-0325">Glycoprotein</keyword>
<keyword id="KW-0378">Hydrolase</keyword>
<keyword id="KW-0645">Protease</keyword>
<keyword id="KW-1185">Reference proteome</keyword>
<keyword id="KW-0964">Secreted</keyword>
<keyword id="KW-0720">Serine protease</keyword>
<keyword id="KW-0732">Signal</keyword>
<keyword id="KW-0865">Zymogen</keyword>
<sequence length="754" mass="81507">MGIVKGRSRAGLFIGFLFIVNVGFCVFAQESSNEERKIYVVHLGVRRHDDSELVSESHQRMLESVFESAEAARESIVYNYHHGFSGFAARLTDSQAKQLSDRPDVFSVAPNRKVELQSTRIYDYLGLSPSFPSGVLHESNMGSDLVIGFLDSGVWPESPAYNDEGLEPIPKHWKGKCVAGEDFDPAKHCNKKLVGAKYFTDGFDENNSGISEEDFMSPRGYRGHGTMVSSIAASSFVPNVSYGGLAPGVMRGAAPKARIAMYKIVWDRALLMSSTATMVKAFDEAINDGVDVLSISLASAAPFRPIDSITGDLELGSFHAVMKGIPVIAGASNTGPEAYTVANVFPWMLTVAATNIDRTFYADMTFGNNITIIGQAQYTGKEVSAGLVYIEHYKTDTSGMLGKVVLTFVKEDWEMASALATTTINKAAGLIVARSGDYQSDIVYNQPFIYVDYEVGAKILRYIRSSSSPTIKISTGKTLVGRPIATQVCGFSSRGPNGLSPAILKPDIAAPGVTILGATSQAYPDSFGGYFLGTGTSYATPVVAGLVVLLKALHPDWSPAALKSAIMTTAWKTDPSGEPIFAEGEPRKLADPFDYGAGLVNAERAKDPGLVYDMNIDDYIHYFCATGYNDTSITIITGKPTKCSSPLPSILDLNYPAITIPDLEEEVTVTRTVTNVGPVDSVYRAVVEPPRGVEIVVEPETLVFCSNTKKLGFKVRVSSSHKSNTGFFFGSFTWTDGTRNVTIPLSVRIRVLNP</sequence>
<gene>
    <name evidence="7" type="primary">SBT3.12</name>
    <name evidence="9" type="ordered locus">At4g21326</name>
    <name evidence="10" type="ORF">T6K22.50</name>
</gene>